<keyword id="KW-1185">Reference proteome</keyword>
<keyword id="KW-0677">Repeat</keyword>
<keyword id="KW-0853">WD repeat</keyword>
<gene>
    <name evidence="1" type="primary">CIA1</name>
    <name type="ordered locus">CNJ03240</name>
</gene>
<accession>P0CS30</accession>
<accession>Q55LG3</accession>
<accession>Q5KA32</accession>
<name>CIAO1_CRYNJ</name>
<proteinExistence type="inferred from homology"/>
<dbReference type="EMBL" id="AE017350">
    <property type="protein sequence ID" value="AAW45887.1"/>
    <property type="molecule type" value="Genomic_DNA"/>
</dbReference>
<dbReference type="RefSeq" id="XP_567404.1">
    <property type="nucleotide sequence ID" value="XM_567404.1"/>
</dbReference>
<dbReference type="SMR" id="P0CS30"/>
<dbReference type="FunCoup" id="P0CS30">
    <property type="interactions" value="201"/>
</dbReference>
<dbReference type="STRING" id="214684.P0CS30"/>
<dbReference type="PaxDb" id="214684-P0CS30"/>
<dbReference type="EnsemblFungi" id="AAW45887">
    <property type="protein sequence ID" value="AAW45887"/>
    <property type="gene ID" value="CNJ03240"/>
</dbReference>
<dbReference type="GeneID" id="3254321"/>
<dbReference type="KEGG" id="cne:CNJ03240"/>
<dbReference type="VEuPathDB" id="FungiDB:CNJ03240"/>
<dbReference type="eggNOG" id="KOG0645">
    <property type="taxonomic scope" value="Eukaryota"/>
</dbReference>
<dbReference type="HOGENOM" id="CLU_000288_57_8_1"/>
<dbReference type="InParanoid" id="P0CS30"/>
<dbReference type="OMA" id="MPILASC"/>
<dbReference type="OrthoDB" id="284782at2759"/>
<dbReference type="Proteomes" id="UP000002149">
    <property type="component" value="Chromosome 10"/>
</dbReference>
<dbReference type="GO" id="GO:0097361">
    <property type="term" value="C:cytosolic [4Fe-4S] assembly targeting complex"/>
    <property type="evidence" value="ECO:0000318"/>
    <property type="project" value="GO_Central"/>
</dbReference>
<dbReference type="GO" id="GO:0016226">
    <property type="term" value="P:iron-sulfur cluster assembly"/>
    <property type="evidence" value="ECO:0000318"/>
    <property type="project" value="GO_Central"/>
</dbReference>
<dbReference type="CDD" id="cd00200">
    <property type="entry name" value="WD40"/>
    <property type="match status" value="1"/>
</dbReference>
<dbReference type="Gene3D" id="2.130.10.10">
    <property type="entry name" value="YVTN repeat-like/Quinoprotein amine dehydrogenase"/>
    <property type="match status" value="2"/>
</dbReference>
<dbReference type="HAMAP" id="MF_03037">
    <property type="entry name" value="ciao1"/>
    <property type="match status" value="1"/>
</dbReference>
<dbReference type="InterPro" id="IPR028608">
    <property type="entry name" value="CIAO1/Cia1"/>
</dbReference>
<dbReference type="InterPro" id="IPR020472">
    <property type="entry name" value="G-protein_beta_WD-40_rep"/>
</dbReference>
<dbReference type="InterPro" id="IPR015943">
    <property type="entry name" value="WD40/YVTN_repeat-like_dom_sf"/>
</dbReference>
<dbReference type="InterPro" id="IPR019775">
    <property type="entry name" value="WD40_repeat_CS"/>
</dbReference>
<dbReference type="InterPro" id="IPR036322">
    <property type="entry name" value="WD40_repeat_dom_sf"/>
</dbReference>
<dbReference type="InterPro" id="IPR001680">
    <property type="entry name" value="WD40_rpt"/>
</dbReference>
<dbReference type="PANTHER" id="PTHR19920:SF0">
    <property type="entry name" value="CYTOSOLIC IRON-SULFUR PROTEIN ASSEMBLY PROTEIN CIAO1-RELATED"/>
    <property type="match status" value="1"/>
</dbReference>
<dbReference type="PANTHER" id="PTHR19920">
    <property type="entry name" value="WD40 PROTEIN CIAO1"/>
    <property type="match status" value="1"/>
</dbReference>
<dbReference type="Pfam" id="PF00400">
    <property type="entry name" value="WD40"/>
    <property type="match status" value="7"/>
</dbReference>
<dbReference type="PRINTS" id="PR00320">
    <property type="entry name" value="GPROTEINBRPT"/>
</dbReference>
<dbReference type="SMART" id="SM00320">
    <property type="entry name" value="WD40"/>
    <property type="match status" value="7"/>
</dbReference>
<dbReference type="SUPFAM" id="SSF50978">
    <property type="entry name" value="WD40 repeat-like"/>
    <property type="match status" value="1"/>
</dbReference>
<dbReference type="PROSITE" id="PS00678">
    <property type="entry name" value="WD_REPEATS_1"/>
    <property type="match status" value="1"/>
</dbReference>
<dbReference type="PROSITE" id="PS50082">
    <property type="entry name" value="WD_REPEATS_2"/>
    <property type="match status" value="6"/>
</dbReference>
<dbReference type="PROSITE" id="PS50294">
    <property type="entry name" value="WD_REPEATS_REGION"/>
    <property type="match status" value="1"/>
</dbReference>
<sequence length="440" mass="47874">MLRLQSLGSLPAHAEPAWTVSFNPTRSLLASCSTDRTIRLYSYIIPSSSDGLPSQDDSQAVFSLAKVIETDHKRTVRSIAWSPDGRTLASGSFDSTVGVWEEVIPLSDDEEEEDEGAQGVYKPAGVDSDGDGDGGKEKEWECVTTLEGHESECKSVGFSSDGALLASCSRDKSVWVWEVQPDADFECIAVMMEHSQDVKSIAWHPHEEILASASYDSYIHLAYDDPDSDWCIFQKLHPSLPSTPLTIPSTSPSHLIDALVPTEEEKKAEAELQVPPLEEDETVWCLAWSPDGRWLASGGDNGGIRLWQRTGSQPDSAFKEILHTAAHSRSVFSLSWSPPYPSAESAGSTDSTDLGMLASAGEDGKIIIWQITVPPSPSSASQEIDNEQISIRPIAAQKDAHGVNDINSVAWCVREDKKGWGMLSSAGDDGSVKVWRVVRD</sequence>
<organism>
    <name type="scientific">Cryptococcus neoformans var. neoformans serotype D (strain JEC21 / ATCC MYA-565)</name>
    <name type="common">Filobasidiella neoformans</name>
    <dbReference type="NCBI Taxonomy" id="214684"/>
    <lineage>
        <taxon>Eukaryota</taxon>
        <taxon>Fungi</taxon>
        <taxon>Dikarya</taxon>
        <taxon>Basidiomycota</taxon>
        <taxon>Agaricomycotina</taxon>
        <taxon>Tremellomycetes</taxon>
        <taxon>Tremellales</taxon>
        <taxon>Cryptococcaceae</taxon>
        <taxon>Cryptococcus</taxon>
        <taxon>Cryptococcus neoformans species complex</taxon>
    </lineage>
</organism>
<evidence type="ECO:0000255" key="1">
    <source>
        <dbReference type="HAMAP-Rule" id="MF_03037"/>
    </source>
</evidence>
<evidence type="ECO:0000256" key="2">
    <source>
        <dbReference type="SAM" id="MobiDB-lite"/>
    </source>
</evidence>
<feature type="chain" id="PRO_0000382513" description="Probable cytosolic iron-sulfur protein assembly protein 1">
    <location>
        <begin position="1"/>
        <end position="440"/>
    </location>
</feature>
<feature type="repeat" description="WD 1">
    <location>
        <begin position="12"/>
        <end position="51"/>
    </location>
</feature>
<feature type="repeat" description="WD 2">
    <location>
        <begin position="71"/>
        <end position="110"/>
    </location>
</feature>
<feature type="repeat" description="WD 3">
    <location>
        <begin position="148"/>
        <end position="187"/>
    </location>
</feature>
<feature type="repeat" description="WD 4">
    <location>
        <begin position="193"/>
        <end position="233"/>
    </location>
</feature>
<feature type="repeat" description="WD 5">
    <location>
        <begin position="278"/>
        <end position="317"/>
    </location>
</feature>
<feature type="repeat" description="WD 6">
    <location>
        <begin position="326"/>
        <end position="379"/>
    </location>
</feature>
<feature type="repeat" description="WD 7">
    <location>
        <begin position="401"/>
        <end position="440"/>
    </location>
</feature>
<feature type="region of interest" description="Disordered" evidence="2">
    <location>
        <begin position="107"/>
        <end position="137"/>
    </location>
</feature>
<feature type="compositionally biased region" description="Acidic residues" evidence="2">
    <location>
        <begin position="107"/>
        <end position="116"/>
    </location>
</feature>
<comment type="function">
    <text evidence="1">Essential component of the cytosolic iron-sulfur (Fe/S) protein assembly machinery. Required for the maturation of extramitochondrial Fe/S proteins.</text>
</comment>
<comment type="similarity">
    <text evidence="1">Belongs to the WD repeat CIA1 family.</text>
</comment>
<protein>
    <recommendedName>
        <fullName evidence="1">Probable cytosolic iron-sulfur protein assembly protein 1</fullName>
    </recommendedName>
</protein>
<reference key="1">
    <citation type="journal article" date="2005" name="Science">
        <title>The genome of the basidiomycetous yeast and human pathogen Cryptococcus neoformans.</title>
        <authorList>
            <person name="Loftus B.J."/>
            <person name="Fung E."/>
            <person name="Roncaglia P."/>
            <person name="Rowley D."/>
            <person name="Amedeo P."/>
            <person name="Bruno D."/>
            <person name="Vamathevan J."/>
            <person name="Miranda M."/>
            <person name="Anderson I.J."/>
            <person name="Fraser J.A."/>
            <person name="Allen J.E."/>
            <person name="Bosdet I.E."/>
            <person name="Brent M.R."/>
            <person name="Chiu R."/>
            <person name="Doering T.L."/>
            <person name="Donlin M.J."/>
            <person name="D'Souza C.A."/>
            <person name="Fox D.S."/>
            <person name="Grinberg V."/>
            <person name="Fu J."/>
            <person name="Fukushima M."/>
            <person name="Haas B.J."/>
            <person name="Huang J.C."/>
            <person name="Janbon G."/>
            <person name="Jones S.J.M."/>
            <person name="Koo H.L."/>
            <person name="Krzywinski M.I."/>
            <person name="Kwon-Chung K.J."/>
            <person name="Lengeler K.B."/>
            <person name="Maiti R."/>
            <person name="Marra M.A."/>
            <person name="Marra R.E."/>
            <person name="Mathewson C.A."/>
            <person name="Mitchell T.G."/>
            <person name="Pertea M."/>
            <person name="Riggs F.R."/>
            <person name="Salzberg S.L."/>
            <person name="Schein J.E."/>
            <person name="Shvartsbeyn A."/>
            <person name="Shin H."/>
            <person name="Shumway M."/>
            <person name="Specht C.A."/>
            <person name="Suh B.B."/>
            <person name="Tenney A."/>
            <person name="Utterback T.R."/>
            <person name="Wickes B.L."/>
            <person name="Wortman J.R."/>
            <person name="Wye N.H."/>
            <person name="Kronstad J.W."/>
            <person name="Lodge J.K."/>
            <person name="Heitman J."/>
            <person name="Davis R.W."/>
            <person name="Fraser C.M."/>
            <person name="Hyman R.W."/>
        </authorList>
    </citation>
    <scope>NUCLEOTIDE SEQUENCE [LARGE SCALE GENOMIC DNA]</scope>
    <source>
        <strain>JEC21 / ATCC MYA-565</strain>
    </source>
</reference>